<gene>
    <name evidence="1" type="primary">argH</name>
    <name type="ordered locus">SSU98_2018</name>
</gene>
<protein>
    <recommendedName>
        <fullName evidence="1">Argininosuccinate lyase</fullName>
        <shortName evidence="1">ASAL</shortName>
        <ecNumber evidence="1">4.3.2.1</ecNumber>
    </recommendedName>
    <alternativeName>
        <fullName evidence="1">Arginosuccinase</fullName>
    </alternativeName>
</protein>
<comment type="catalytic activity">
    <reaction evidence="1">
        <text>2-(N(omega)-L-arginino)succinate = fumarate + L-arginine</text>
        <dbReference type="Rhea" id="RHEA:24020"/>
        <dbReference type="ChEBI" id="CHEBI:29806"/>
        <dbReference type="ChEBI" id="CHEBI:32682"/>
        <dbReference type="ChEBI" id="CHEBI:57472"/>
        <dbReference type="EC" id="4.3.2.1"/>
    </reaction>
</comment>
<comment type="pathway">
    <text evidence="1">Amino-acid biosynthesis; L-arginine biosynthesis; L-arginine from L-ornithine and carbamoyl phosphate: step 3/3.</text>
</comment>
<comment type="subcellular location">
    <subcellularLocation>
        <location evidence="1">Cytoplasm</location>
    </subcellularLocation>
</comment>
<comment type="similarity">
    <text evidence="1">Belongs to the lyase 1 family. Argininosuccinate lyase subfamily.</text>
</comment>
<accession>A4W487</accession>
<proteinExistence type="inferred from homology"/>
<keyword id="KW-0028">Amino-acid biosynthesis</keyword>
<keyword id="KW-0055">Arginine biosynthesis</keyword>
<keyword id="KW-0963">Cytoplasm</keyword>
<keyword id="KW-0456">Lyase</keyword>
<evidence type="ECO:0000255" key="1">
    <source>
        <dbReference type="HAMAP-Rule" id="MF_00006"/>
    </source>
</evidence>
<organism>
    <name type="scientific">Streptococcus suis (strain 98HAH33)</name>
    <dbReference type="NCBI Taxonomy" id="391296"/>
    <lineage>
        <taxon>Bacteria</taxon>
        <taxon>Bacillati</taxon>
        <taxon>Bacillota</taxon>
        <taxon>Bacilli</taxon>
        <taxon>Lactobacillales</taxon>
        <taxon>Streptococcaceae</taxon>
        <taxon>Streptococcus</taxon>
    </lineage>
</organism>
<reference key="1">
    <citation type="journal article" date="2007" name="PLoS ONE">
        <title>A glimpse of streptococcal toxic shock syndrome from comparative genomics of S. suis 2 Chinese isolates.</title>
        <authorList>
            <person name="Chen C."/>
            <person name="Tang J."/>
            <person name="Dong W."/>
            <person name="Wang C."/>
            <person name="Feng Y."/>
            <person name="Wang J."/>
            <person name="Zheng F."/>
            <person name="Pan X."/>
            <person name="Liu D."/>
            <person name="Li M."/>
            <person name="Song Y."/>
            <person name="Zhu X."/>
            <person name="Sun H."/>
            <person name="Feng T."/>
            <person name="Guo Z."/>
            <person name="Ju A."/>
            <person name="Ge J."/>
            <person name="Dong Y."/>
            <person name="Sun W."/>
            <person name="Jiang Y."/>
            <person name="Wang J."/>
            <person name="Yan J."/>
            <person name="Yang H."/>
            <person name="Wang X."/>
            <person name="Gao G.F."/>
            <person name="Yang R."/>
            <person name="Wang J."/>
            <person name="Yu J."/>
        </authorList>
    </citation>
    <scope>NUCLEOTIDE SEQUENCE [LARGE SCALE GENOMIC DNA]</scope>
    <source>
        <strain>98HAH33</strain>
    </source>
</reference>
<sequence length="464" mass="52048">MEAKKLWGGRFEASLEEWVEEFGASIRFDQKLAKYDIQGSLAHVKMLGQTRIISQAEAQVIQAGLEELLEEYEAGKLVFDIRNEDIHMNIESLLTEKIGSVAGKLHTARSRNDQVATDMHLYLKDTLFQVVDKLTNLRQILVDLAQEHVETIMPGYTHLQHAQPISFAQHLLAYYNMFSRDSERFAFNMQHTNVSPLGAAALAGTTFPIDRQMTSDLMGFAKPYSNSLDAVSDRDFILEFLSNASILMMHMSRLCEEIINWCSYEYQFVTLSDTFSTGSSIMPQKKNPDMAELIRGKTGRVYGNLVGLLTVMKSLPLTYNKDLQEDKEGMFDTAETVLISIDILAGMLKTMTVHKERMAQSTEKDFSNATELADYLASKGLPFRQAHEIVGKLVLECSKAGHYLQDVSFETYQAISPLIQADIYDALSSKVAVSRRNSLGGTGFESIADQLKSAKEEIQNAKSL</sequence>
<dbReference type="EC" id="4.3.2.1" evidence="1"/>
<dbReference type="EMBL" id="CP000408">
    <property type="protein sequence ID" value="ABP93176.1"/>
    <property type="molecule type" value="Genomic_DNA"/>
</dbReference>
<dbReference type="SMR" id="A4W487"/>
<dbReference type="KEGG" id="ssv:SSU98_2018"/>
<dbReference type="HOGENOM" id="CLU_027272_2_3_9"/>
<dbReference type="UniPathway" id="UPA00068">
    <property type="reaction ID" value="UER00114"/>
</dbReference>
<dbReference type="GO" id="GO:0005829">
    <property type="term" value="C:cytosol"/>
    <property type="evidence" value="ECO:0007669"/>
    <property type="project" value="TreeGrafter"/>
</dbReference>
<dbReference type="GO" id="GO:0004056">
    <property type="term" value="F:argininosuccinate lyase activity"/>
    <property type="evidence" value="ECO:0007669"/>
    <property type="project" value="UniProtKB-UniRule"/>
</dbReference>
<dbReference type="GO" id="GO:0042450">
    <property type="term" value="P:arginine biosynthetic process via ornithine"/>
    <property type="evidence" value="ECO:0007669"/>
    <property type="project" value="InterPro"/>
</dbReference>
<dbReference type="GO" id="GO:0006526">
    <property type="term" value="P:L-arginine biosynthetic process"/>
    <property type="evidence" value="ECO:0007669"/>
    <property type="project" value="UniProtKB-UniRule"/>
</dbReference>
<dbReference type="CDD" id="cd01359">
    <property type="entry name" value="Argininosuccinate_lyase"/>
    <property type="match status" value="1"/>
</dbReference>
<dbReference type="FunFam" id="1.10.275.10:FF:000002">
    <property type="entry name" value="Argininosuccinate lyase"/>
    <property type="match status" value="1"/>
</dbReference>
<dbReference type="FunFam" id="1.10.40.30:FF:000001">
    <property type="entry name" value="Argininosuccinate lyase"/>
    <property type="match status" value="1"/>
</dbReference>
<dbReference type="FunFam" id="1.20.200.10:FF:000002">
    <property type="entry name" value="Argininosuccinate lyase"/>
    <property type="match status" value="1"/>
</dbReference>
<dbReference type="Gene3D" id="1.10.40.30">
    <property type="entry name" value="Fumarase/aspartase (C-terminal domain)"/>
    <property type="match status" value="1"/>
</dbReference>
<dbReference type="Gene3D" id="1.20.200.10">
    <property type="entry name" value="Fumarase/aspartase (Central domain)"/>
    <property type="match status" value="1"/>
</dbReference>
<dbReference type="Gene3D" id="1.10.275.10">
    <property type="entry name" value="Fumarase/aspartase (N-terminal domain)"/>
    <property type="match status" value="1"/>
</dbReference>
<dbReference type="HAMAP" id="MF_00006">
    <property type="entry name" value="Arg_succ_lyase"/>
    <property type="match status" value="1"/>
</dbReference>
<dbReference type="InterPro" id="IPR029419">
    <property type="entry name" value="Arg_succ_lyase_C"/>
</dbReference>
<dbReference type="InterPro" id="IPR009049">
    <property type="entry name" value="Argininosuccinate_lyase"/>
</dbReference>
<dbReference type="InterPro" id="IPR024083">
    <property type="entry name" value="Fumarase/histidase_N"/>
</dbReference>
<dbReference type="InterPro" id="IPR020557">
    <property type="entry name" value="Fumarate_lyase_CS"/>
</dbReference>
<dbReference type="InterPro" id="IPR000362">
    <property type="entry name" value="Fumarate_lyase_fam"/>
</dbReference>
<dbReference type="InterPro" id="IPR022761">
    <property type="entry name" value="Fumarate_lyase_N"/>
</dbReference>
<dbReference type="InterPro" id="IPR008948">
    <property type="entry name" value="L-Aspartase-like"/>
</dbReference>
<dbReference type="NCBIfam" id="TIGR00838">
    <property type="entry name" value="argH"/>
    <property type="match status" value="1"/>
</dbReference>
<dbReference type="PANTHER" id="PTHR43814">
    <property type="entry name" value="ARGININOSUCCINATE LYASE"/>
    <property type="match status" value="1"/>
</dbReference>
<dbReference type="PANTHER" id="PTHR43814:SF1">
    <property type="entry name" value="ARGININOSUCCINATE LYASE"/>
    <property type="match status" value="1"/>
</dbReference>
<dbReference type="Pfam" id="PF14698">
    <property type="entry name" value="ASL_C2"/>
    <property type="match status" value="1"/>
</dbReference>
<dbReference type="Pfam" id="PF00206">
    <property type="entry name" value="Lyase_1"/>
    <property type="match status" value="1"/>
</dbReference>
<dbReference type="PRINTS" id="PR00145">
    <property type="entry name" value="ARGSUCLYASE"/>
</dbReference>
<dbReference type="PRINTS" id="PR00149">
    <property type="entry name" value="FUMRATELYASE"/>
</dbReference>
<dbReference type="SUPFAM" id="SSF48557">
    <property type="entry name" value="L-aspartase-like"/>
    <property type="match status" value="1"/>
</dbReference>
<dbReference type="PROSITE" id="PS00163">
    <property type="entry name" value="FUMARATE_LYASES"/>
    <property type="match status" value="1"/>
</dbReference>
<feature type="chain" id="PRO_0000321458" description="Argininosuccinate lyase">
    <location>
        <begin position="1"/>
        <end position="464"/>
    </location>
</feature>
<name>ARLY_STRS2</name>